<sequence length="464" mass="49122">MSRTETDSLGTIEVPDDAYWGAQTQRSLENFAIGGQRMPLAVIHALALIKKAAARVNDHLGELPPEVARLIEQAADEVLAGRHDEHFPLVVWQTGSGTQTNMNVNEVIAGRANELAGNPRGGKSPVHPNDHVNRAQSSNDSFPTAMHIAAAKAVHEQLLPAIAELSGGLAEQSARHASLVKTGRTHLMDATPITFGQELSAFVAQLDYAERAIRAALPAVYQLAQGGTAVGTGLNAPKGFADAIAAEIAAESGLPFVAAPNKFAALAGHEPLVILSGALKSLAVALMKIANDLRLLGSGPRAGFAEVKLPANEPGSSIMPGKVNPTQCEALSMLACQVMGNDSTISFAASQGHLQLNVFKPVIVYNLLESIRLLADGCRNFNKHCVAGLEPDAQRMADLLERGLMLVTALNPHIGYDKAAEIAKKAYAEGTTLRAAALQLGYLDEAQFDEWVRPEQMLEAGHHG</sequence>
<feature type="chain" id="PRO_0000161300" description="Fumarate hydratase class II 1">
    <location>
        <begin position="1"/>
        <end position="464"/>
    </location>
</feature>
<feature type="active site" description="Proton donor/acceptor" evidence="1">
    <location>
        <position position="186"/>
    </location>
</feature>
<feature type="active site" evidence="1">
    <location>
        <position position="316"/>
    </location>
</feature>
<feature type="binding site" evidence="1">
    <location>
        <begin position="96"/>
        <end position="98"/>
    </location>
    <ligand>
        <name>substrate</name>
    </ligand>
</feature>
<feature type="binding site" description="in site B" evidence="1">
    <location>
        <begin position="127"/>
        <end position="130"/>
    </location>
    <ligand>
        <name>substrate</name>
    </ligand>
</feature>
<feature type="binding site" evidence="1">
    <location>
        <begin position="137"/>
        <end position="139"/>
    </location>
    <ligand>
        <name>substrate</name>
    </ligand>
</feature>
<feature type="binding site" evidence="1">
    <location>
        <position position="185"/>
    </location>
    <ligand>
        <name>substrate</name>
    </ligand>
</feature>
<feature type="binding site" evidence="1">
    <location>
        <position position="317"/>
    </location>
    <ligand>
        <name>substrate</name>
    </ligand>
</feature>
<feature type="binding site" evidence="1">
    <location>
        <begin position="322"/>
        <end position="324"/>
    </location>
    <ligand>
        <name>substrate</name>
    </ligand>
</feature>
<feature type="site" description="Important for catalytic activity" evidence="1">
    <location>
        <position position="329"/>
    </location>
</feature>
<protein>
    <recommendedName>
        <fullName evidence="1">Fumarate hydratase class II 1</fullName>
        <shortName evidence="1">Fumarase C 1</shortName>
        <ecNumber evidence="1">4.2.1.2</ecNumber>
    </recommendedName>
    <alternativeName>
        <fullName evidence="1">Aerobic fumarase 1</fullName>
    </alternativeName>
    <alternativeName>
        <fullName evidence="1">Iron-independent fumarase 1</fullName>
    </alternativeName>
</protein>
<organism>
    <name type="scientific">Pseudomonas aeruginosa (strain ATCC 15692 / DSM 22644 / CIP 104116 / JCM 14847 / LMG 12228 / 1C / PRS 101 / PAO1)</name>
    <dbReference type="NCBI Taxonomy" id="208964"/>
    <lineage>
        <taxon>Bacteria</taxon>
        <taxon>Pseudomonadati</taxon>
        <taxon>Pseudomonadota</taxon>
        <taxon>Gammaproteobacteria</taxon>
        <taxon>Pseudomonadales</taxon>
        <taxon>Pseudomonadaceae</taxon>
        <taxon>Pseudomonas</taxon>
    </lineage>
</organism>
<name>FUMC1_PSEAE</name>
<dbReference type="EC" id="4.2.1.2" evidence="1"/>
<dbReference type="EMBL" id="AE004091">
    <property type="protein sequence ID" value="AAG04243.1"/>
    <property type="molecule type" value="Genomic_DNA"/>
</dbReference>
<dbReference type="PIR" id="H83538">
    <property type="entry name" value="H83538"/>
</dbReference>
<dbReference type="RefSeq" id="WP_003085854.1">
    <property type="nucleotide sequence ID" value="NZ_QZGE01000007.1"/>
</dbReference>
<dbReference type="SMR" id="Q9I587"/>
<dbReference type="FunCoup" id="Q9I587">
    <property type="interactions" value="577"/>
</dbReference>
<dbReference type="STRING" id="208964.PA0854"/>
<dbReference type="PaxDb" id="208964-PA0854"/>
<dbReference type="KEGG" id="pae:PA0854"/>
<dbReference type="PATRIC" id="fig|208964.12.peg.886"/>
<dbReference type="PseudoCAP" id="PA0854"/>
<dbReference type="HOGENOM" id="CLU_021594_4_1_6"/>
<dbReference type="InParanoid" id="Q9I587"/>
<dbReference type="OrthoDB" id="9802809at2"/>
<dbReference type="PhylomeDB" id="Q9I587"/>
<dbReference type="BioCyc" id="PAER208964:G1FZ6-869-MONOMER"/>
<dbReference type="UniPathway" id="UPA00223">
    <property type="reaction ID" value="UER01007"/>
</dbReference>
<dbReference type="Proteomes" id="UP000002438">
    <property type="component" value="Chromosome"/>
</dbReference>
<dbReference type="GO" id="GO:0005737">
    <property type="term" value="C:cytoplasm"/>
    <property type="evidence" value="ECO:0007669"/>
    <property type="project" value="UniProtKB-SubCell"/>
</dbReference>
<dbReference type="GO" id="GO:0004333">
    <property type="term" value="F:fumarate hydratase activity"/>
    <property type="evidence" value="ECO:0000318"/>
    <property type="project" value="GO_Central"/>
</dbReference>
<dbReference type="GO" id="GO:0006106">
    <property type="term" value="P:fumarate metabolic process"/>
    <property type="evidence" value="ECO:0000318"/>
    <property type="project" value="GO_Central"/>
</dbReference>
<dbReference type="GO" id="GO:0006108">
    <property type="term" value="P:malate metabolic process"/>
    <property type="evidence" value="ECO:0000318"/>
    <property type="project" value="GO_Central"/>
</dbReference>
<dbReference type="GO" id="GO:0006099">
    <property type="term" value="P:tricarboxylic acid cycle"/>
    <property type="evidence" value="ECO:0000318"/>
    <property type="project" value="GO_Central"/>
</dbReference>
<dbReference type="CDD" id="cd01362">
    <property type="entry name" value="Fumarase_classII"/>
    <property type="match status" value="1"/>
</dbReference>
<dbReference type="FunFam" id="1.10.40.30:FF:000002">
    <property type="entry name" value="Fumarate hydratase class II"/>
    <property type="match status" value="1"/>
</dbReference>
<dbReference type="FunFam" id="1.10.275.10:FF:000001">
    <property type="entry name" value="Fumarate hydratase, mitochondrial"/>
    <property type="match status" value="1"/>
</dbReference>
<dbReference type="FunFam" id="1.20.200.10:FF:000001">
    <property type="entry name" value="Fumarate hydratase, mitochondrial"/>
    <property type="match status" value="1"/>
</dbReference>
<dbReference type="Gene3D" id="1.10.40.30">
    <property type="entry name" value="Fumarase/aspartase (C-terminal domain)"/>
    <property type="match status" value="1"/>
</dbReference>
<dbReference type="Gene3D" id="1.20.200.10">
    <property type="entry name" value="Fumarase/aspartase (Central domain)"/>
    <property type="match status" value="1"/>
</dbReference>
<dbReference type="Gene3D" id="1.10.275.10">
    <property type="entry name" value="Fumarase/aspartase (N-terminal domain)"/>
    <property type="match status" value="1"/>
</dbReference>
<dbReference type="HAMAP" id="MF_00743">
    <property type="entry name" value="FumaraseC"/>
    <property type="match status" value="1"/>
</dbReference>
<dbReference type="InterPro" id="IPR005677">
    <property type="entry name" value="Fum_hydII"/>
</dbReference>
<dbReference type="InterPro" id="IPR024083">
    <property type="entry name" value="Fumarase/histidase_N"/>
</dbReference>
<dbReference type="InterPro" id="IPR018951">
    <property type="entry name" value="Fumarase_C_C"/>
</dbReference>
<dbReference type="InterPro" id="IPR020557">
    <property type="entry name" value="Fumarate_lyase_CS"/>
</dbReference>
<dbReference type="InterPro" id="IPR000362">
    <property type="entry name" value="Fumarate_lyase_fam"/>
</dbReference>
<dbReference type="InterPro" id="IPR022761">
    <property type="entry name" value="Fumarate_lyase_N"/>
</dbReference>
<dbReference type="InterPro" id="IPR008948">
    <property type="entry name" value="L-Aspartase-like"/>
</dbReference>
<dbReference type="NCBIfam" id="TIGR00979">
    <property type="entry name" value="fumC_II"/>
    <property type="match status" value="1"/>
</dbReference>
<dbReference type="NCBIfam" id="NF008909">
    <property type="entry name" value="PRK12273.1"/>
    <property type="match status" value="1"/>
</dbReference>
<dbReference type="NCBIfam" id="NF009089">
    <property type="entry name" value="PRK12425.1"/>
    <property type="match status" value="1"/>
</dbReference>
<dbReference type="PANTHER" id="PTHR11444">
    <property type="entry name" value="ASPARTATEAMMONIA/ARGININOSUCCINATE/ADENYLOSUCCINATE LYASE"/>
    <property type="match status" value="1"/>
</dbReference>
<dbReference type="PANTHER" id="PTHR11444:SF1">
    <property type="entry name" value="FUMARATE HYDRATASE, MITOCHONDRIAL"/>
    <property type="match status" value="1"/>
</dbReference>
<dbReference type="Pfam" id="PF10415">
    <property type="entry name" value="FumaraseC_C"/>
    <property type="match status" value="1"/>
</dbReference>
<dbReference type="Pfam" id="PF00206">
    <property type="entry name" value="Lyase_1"/>
    <property type="match status" value="1"/>
</dbReference>
<dbReference type="PRINTS" id="PR00145">
    <property type="entry name" value="ARGSUCLYASE"/>
</dbReference>
<dbReference type="PRINTS" id="PR00149">
    <property type="entry name" value="FUMRATELYASE"/>
</dbReference>
<dbReference type="SUPFAM" id="SSF48557">
    <property type="entry name" value="L-aspartase-like"/>
    <property type="match status" value="1"/>
</dbReference>
<dbReference type="PROSITE" id="PS00163">
    <property type="entry name" value="FUMARATE_LYASES"/>
    <property type="match status" value="1"/>
</dbReference>
<evidence type="ECO:0000255" key="1">
    <source>
        <dbReference type="HAMAP-Rule" id="MF_00743"/>
    </source>
</evidence>
<keyword id="KW-0963">Cytoplasm</keyword>
<keyword id="KW-0456">Lyase</keyword>
<keyword id="KW-1185">Reference proteome</keyword>
<keyword id="KW-0816">Tricarboxylic acid cycle</keyword>
<accession>Q9I587</accession>
<proteinExistence type="inferred from homology"/>
<gene>
    <name evidence="1" type="primary">fumC1</name>
    <name type="ordered locus">PA0854</name>
</gene>
<comment type="function">
    <text evidence="1">Involved in the TCA cycle. Catalyzes the stereospecific interconversion of fumarate to L-malate.</text>
</comment>
<comment type="catalytic activity">
    <reaction evidence="1">
        <text>(S)-malate = fumarate + H2O</text>
        <dbReference type="Rhea" id="RHEA:12460"/>
        <dbReference type="ChEBI" id="CHEBI:15377"/>
        <dbReference type="ChEBI" id="CHEBI:15589"/>
        <dbReference type="ChEBI" id="CHEBI:29806"/>
        <dbReference type="EC" id="4.2.1.2"/>
    </reaction>
</comment>
<comment type="pathway">
    <text evidence="1">Carbohydrate metabolism; tricarboxylic acid cycle; (S)-malate from fumarate: step 1/1.</text>
</comment>
<comment type="subunit">
    <text evidence="1">Homotetramer.</text>
</comment>
<comment type="subcellular location">
    <subcellularLocation>
        <location evidence="1">Cytoplasm</location>
    </subcellularLocation>
</comment>
<comment type="miscellaneous">
    <text evidence="1">There are 2 substrate-binding sites: the catalytic A site, and the non-catalytic B site that may play a role in the transfer of substrate or product between the active site and the solvent. Alternatively, the B site may bind allosteric effectors.</text>
</comment>
<comment type="similarity">
    <text evidence="1">Belongs to the class-II fumarase/aspartase family. Fumarase subfamily.</text>
</comment>
<reference key="1">
    <citation type="journal article" date="2000" name="Nature">
        <title>Complete genome sequence of Pseudomonas aeruginosa PAO1, an opportunistic pathogen.</title>
        <authorList>
            <person name="Stover C.K."/>
            <person name="Pham X.-Q.T."/>
            <person name="Erwin A.L."/>
            <person name="Mizoguchi S.D."/>
            <person name="Warrener P."/>
            <person name="Hickey M.J."/>
            <person name="Brinkman F.S.L."/>
            <person name="Hufnagle W.O."/>
            <person name="Kowalik D.J."/>
            <person name="Lagrou M."/>
            <person name="Garber R.L."/>
            <person name="Goltry L."/>
            <person name="Tolentino E."/>
            <person name="Westbrock-Wadman S."/>
            <person name="Yuan Y."/>
            <person name="Brody L.L."/>
            <person name="Coulter S.N."/>
            <person name="Folger K.R."/>
            <person name="Kas A."/>
            <person name="Larbig K."/>
            <person name="Lim R.M."/>
            <person name="Smith K.A."/>
            <person name="Spencer D.H."/>
            <person name="Wong G.K.-S."/>
            <person name="Wu Z."/>
            <person name="Paulsen I.T."/>
            <person name="Reizer J."/>
            <person name="Saier M.H. Jr."/>
            <person name="Hancock R.E.W."/>
            <person name="Lory S."/>
            <person name="Olson M.V."/>
        </authorList>
    </citation>
    <scope>NUCLEOTIDE SEQUENCE [LARGE SCALE GENOMIC DNA]</scope>
    <source>
        <strain>ATCC 15692 / DSM 22644 / CIP 104116 / JCM 14847 / LMG 12228 / 1C / PRS 101 / PAO1</strain>
    </source>
</reference>